<reference key="1">
    <citation type="journal article" date="2016" name="Genome Announc.">
        <title>Complete genome sequence of Alkaliphilus metalliredigens strain QYMF, an alkaliphilic and metal-reducing bacterium isolated from borax-contaminated leachate ponds.</title>
        <authorList>
            <person name="Hwang C."/>
            <person name="Copeland A."/>
            <person name="Lucas S."/>
            <person name="Lapidus A."/>
            <person name="Barry K."/>
            <person name="Detter J.C."/>
            <person name="Glavina Del Rio T."/>
            <person name="Hammon N."/>
            <person name="Israni S."/>
            <person name="Dalin E."/>
            <person name="Tice H."/>
            <person name="Pitluck S."/>
            <person name="Chertkov O."/>
            <person name="Brettin T."/>
            <person name="Bruce D."/>
            <person name="Han C."/>
            <person name="Schmutz J."/>
            <person name="Larimer F."/>
            <person name="Land M.L."/>
            <person name="Hauser L."/>
            <person name="Kyrpides N."/>
            <person name="Mikhailova N."/>
            <person name="Ye Q."/>
            <person name="Zhou J."/>
            <person name="Richardson P."/>
            <person name="Fields M.W."/>
        </authorList>
    </citation>
    <scope>NUCLEOTIDE SEQUENCE [LARGE SCALE GENOMIC DNA]</scope>
    <source>
        <strain>QYMF</strain>
    </source>
</reference>
<proteinExistence type="inferred from homology"/>
<name>RUVA_ALKMQ</name>
<accession>A6TQM4</accession>
<sequence length="194" mass="21650">MFEYMKGMIVEAQIDKIIVEVNGIGYRINSSINSASQVKIGQVSTLFTHFVLREDEAHLYGFVDKEELAMFKKLISVSKIGPKVAAGILSTYTPQRLGAYIVSNDAQAIAKSPGVGKKTAERMILELKDKIDDSQVEYDQNFFNHENKNNNEVVDALMALGYTKHEGEQAASAVRDTSLSTEEMIRKALNWLAR</sequence>
<gene>
    <name evidence="1" type="primary">ruvA</name>
    <name type="ordered locus">Amet_2338</name>
</gene>
<evidence type="ECO:0000255" key="1">
    <source>
        <dbReference type="HAMAP-Rule" id="MF_00031"/>
    </source>
</evidence>
<comment type="function">
    <text evidence="1">The RuvA-RuvB-RuvC complex processes Holliday junction (HJ) DNA during genetic recombination and DNA repair, while the RuvA-RuvB complex plays an important role in the rescue of blocked DNA replication forks via replication fork reversal (RFR). RuvA specifically binds to HJ cruciform DNA, conferring on it an open structure. The RuvB hexamer acts as an ATP-dependent pump, pulling dsDNA into and through the RuvAB complex. HJ branch migration allows RuvC to scan DNA until it finds its consensus sequence, where it cleaves and resolves the cruciform DNA.</text>
</comment>
<comment type="subunit">
    <text evidence="1">Homotetramer. Forms an RuvA(8)-RuvB(12)-Holliday junction (HJ) complex. HJ DNA is sandwiched between 2 RuvA tetramers; dsDNA enters through RuvA and exits via RuvB. An RuvB hexamer assembles on each DNA strand where it exits the tetramer. Each RuvB hexamer is contacted by two RuvA subunits (via domain III) on 2 adjacent RuvB subunits; this complex drives branch migration. In the full resolvosome a probable DNA-RuvA(4)-RuvB(12)-RuvC(2) complex forms which resolves the HJ.</text>
</comment>
<comment type="subcellular location">
    <subcellularLocation>
        <location evidence="1">Cytoplasm</location>
    </subcellularLocation>
</comment>
<comment type="domain">
    <text evidence="1">Has three domains with a flexible linker between the domains II and III and assumes an 'L' shape. Domain III is highly mobile and contacts RuvB.</text>
</comment>
<comment type="similarity">
    <text evidence="1">Belongs to the RuvA family.</text>
</comment>
<dbReference type="EMBL" id="CP000724">
    <property type="protein sequence ID" value="ABR48492.1"/>
    <property type="molecule type" value="Genomic_DNA"/>
</dbReference>
<dbReference type="RefSeq" id="WP_012063467.1">
    <property type="nucleotide sequence ID" value="NC_009633.1"/>
</dbReference>
<dbReference type="SMR" id="A6TQM4"/>
<dbReference type="STRING" id="293826.Amet_2338"/>
<dbReference type="KEGG" id="amt:Amet_2338"/>
<dbReference type="eggNOG" id="COG0632">
    <property type="taxonomic scope" value="Bacteria"/>
</dbReference>
<dbReference type="HOGENOM" id="CLU_087936_3_0_9"/>
<dbReference type="OrthoDB" id="5293449at2"/>
<dbReference type="Proteomes" id="UP000001572">
    <property type="component" value="Chromosome"/>
</dbReference>
<dbReference type="GO" id="GO:0005737">
    <property type="term" value="C:cytoplasm"/>
    <property type="evidence" value="ECO:0007669"/>
    <property type="project" value="UniProtKB-SubCell"/>
</dbReference>
<dbReference type="GO" id="GO:0009379">
    <property type="term" value="C:Holliday junction helicase complex"/>
    <property type="evidence" value="ECO:0007669"/>
    <property type="project" value="InterPro"/>
</dbReference>
<dbReference type="GO" id="GO:0048476">
    <property type="term" value="C:Holliday junction resolvase complex"/>
    <property type="evidence" value="ECO:0007669"/>
    <property type="project" value="UniProtKB-UniRule"/>
</dbReference>
<dbReference type="GO" id="GO:0005524">
    <property type="term" value="F:ATP binding"/>
    <property type="evidence" value="ECO:0007669"/>
    <property type="project" value="InterPro"/>
</dbReference>
<dbReference type="GO" id="GO:0000400">
    <property type="term" value="F:four-way junction DNA binding"/>
    <property type="evidence" value="ECO:0007669"/>
    <property type="project" value="UniProtKB-UniRule"/>
</dbReference>
<dbReference type="GO" id="GO:0009378">
    <property type="term" value="F:four-way junction helicase activity"/>
    <property type="evidence" value="ECO:0007669"/>
    <property type="project" value="InterPro"/>
</dbReference>
<dbReference type="GO" id="GO:0006310">
    <property type="term" value="P:DNA recombination"/>
    <property type="evidence" value="ECO:0007669"/>
    <property type="project" value="UniProtKB-UniRule"/>
</dbReference>
<dbReference type="GO" id="GO:0006281">
    <property type="term" value="P:DNA repair"/>
    <property type="evidence" value="ECO:0007669"/>
    <property type="project" value="UniProtKB-UniRule"/>
</dbReference>
<dbReference type="CDD" id="cd14332">
    <property type="entry name" value="UBA_RuvA_C"/>
    <property type="match status" value="1"/>
</dbReference>
<dbReference type="Gene3D" id="1.10.150.20">
    <property type="entry name" value="5' to 3' exonuclease, C-terminal subdomain"/>
    <property type="match status" value="1"/>
</dbReference>
<dbReference type="Gene3D" id="1.10.8.10">
    <property type="entry name" value="DNA helicase RuvA subunit, C-terminal domain"/>
    <property type="match status" value="1"/>
</dbReference>
<dbReference type="Gene3D" id="2.40.50.140">
    <property type="entry name" value="Nucleic acid-binding proteins"/>
    <property type="match status" value="1"/>
</dbReference>
<dbReference type="HAMAP" id="MF_00031">
    <property type="entry name" value="DNA_HJ_migration_RuvA"/>
    <property type="match status" value="1"/>
</dbReference>
<dbReference type="InterPro" id="IPR013849">
    <property type="entry name" value="DNA_helicase_Holl-junc_RuvA_I"/>
</dbReference>
<dbReference type="InterPro" id="IPR012340">
    <property type="entry name" value="NA-bd_OB-fold"/>
</dbReference>
<dbReference type="InterPro" id="IPR000085">
    <property type="entry name" value="RuvA"/>
</dbReference>
<dbReference type="InterPro" id="IPR010994">
    <property type="entry name" value="RuvA_2-like"/>
</dbReference>
<dbReference type="InterPro" id="IPR011114">
    <property type="entry name" value="RuvA_C"/>
</dbReference>
<dbReference type="InterPro" id="IPR036267">
    <property type="entry name" value="RuvA_C_sf"/>
</dbReference>
<dbReference type="NCBIfam" id="TIGR00084">
    <property type="entry name" value="ruvA"/>
    <property type="match status" value="1"/>
</dbReference>
<dbReference type="Pfam" id="PF14520">
    <property type="entry name" value="HHH_5"/>
    <property type="match status" value="1"/>
</dbReference>
<dbReference type="Pfam" id="PF07499">
    <property type="entry name" value="RuvA_C"/>
    <property type="match status" value="1"/>
</dbReference>
<dbReference type="Pfam" id="PF01330">
    <property type="entry name" value="RuvA_N"/>
    <property type="match status" value="1"/>
</dbReference>
<dbReference type="SUPFAM" id="SSF46929">
    <property type="entry name" value="DNA helicase RuvA subunit, C-terminal domain"/>
    <property type="match status" value="1"/>
</dbReference>
<dbReference type="SUPFAM" id="SSF50249">
    <property type="entry name" value="Nucleic acid-binding proteins"/>
    <property type="match status" value="1"/>
</dbReference>
<dbReference type="SUPFAM" id="SSF47781">
    <property type="entry name" value="RuvA domain 2-like"/>
    <property type="match status" value="1"/>
</dbReference>
<protein>
    <recommendedName>
        <fullName evidence="1">Holliday junction branch migration complex subunit RuvA</fullName>
    </recommendedName>
</protein>
<keyword id="KW-0963">Cytoplasm</keyword>
<keyword id="KW-0227">DNA damage</keyword>
<keyword id="KW-0233">DNA recombination</keyword>
<keyword id="KW-0234">DNA repair</keyword>
<keyword id="KW-0238">DNA-binding</keyword>
<keyword id="KW-1185">Reference proteome</keyword>
<organism>
    <name type="scientific">Alkaliphilus metalliredigens (strain QYMF)</name>
    <dbReference type="NCBI Taxonomy" id="293826"/>
    <lineage>
        <taxon>Bacteria</taxon>
        <taxon>Bacillati</taxon>
        <taxon>Bacillota</taxon>
        <taxon>Clostridia</taxon>
        <taxon>Peptostreptococcales</taxon>
        <taxon>Natronincolaceae</taxon>
        <taxon>Alkaliphilus</taxon>
    </lineage>
</organism>
<feature type="chain" id="PRO_1000057232" description="Holliday junction branch migration complex subunit RuvA">
    <location>
        <begin position="1"/>
        <end position="194"/>
    </location>
</feature>
<feature type="region of interest" description="Domain I" evidence="1">
    <location>
        <begin position="1"/>
        <end position="63"/>
    </location>
</feature>
<feature type="region of interest" description="Domain II" evidence="1">
    <location>
        <begin position="64"/>
        <end position="142"/>
    </location>
</feature>
<feature type="region of interest" description="Flexible linker" evidence="1">
    <location>
        <begin position="143"/>
        <end position="146"/>
    </location>
</feature>
<feature type="region of interest" description="Domain III" evidence="1">
    <location>
        <begin position="146"/>
        <end position="194"/>
    </location>
</feature>